<evidence type="ECO:0000250" key="1">
    <source>
        <dbReference type="UniProtKB" id="O00767"/>
    </source>
</evidence>
<evidence type="ECO:0000250" key="2">
    <source>
        <dbReference type="UniProtKB" id="Q8S3C0"/>
    </source>
</evidence>
<evidence type="ECO:0000255" key="3"/>
<evidence type="ECO:0000255" key="4">
    <source>
        <dbReference type="PROSITE-ProRule" id="PRU00279"/>
    </source>
</evidence>
<evidence type="ECO:0000256" key="5">
    <source>
        <dbReference type="SAM" id="MobiDB-lite"/>
    </source>
</evidence>
<evidence type="ECO:0000269" key="6">
    <source>
    </source>
</evidence>
<evidence type="ECO:0000303" key="7">
    <source>
    </source>
</evidence>
<evidence type="ECO:0000305" key="8"/>
<evidence type="ECO:0000305" key="9">
    <source>
    </source>
</evidence>
<evidence type="ECO:0000312" key="10">
    <source>
        <dbReference type="EMBL" id="EDQ68896.1"/>
    </source>
</evidence>
<proteinExistence type="evidence at protein level"/>
<keyword id="KW-0249">Electron transport</keyword>
<keyword id="KW-0275">Fatty acid biosynthesis</keyword>
<keyword id="KW-0276">Fatty acid metabolism</keyword>
<keyword id="KW-0349">Heme</keyword>
<keyword id="KW-0408">Iron</keyword>
<keyword id="KW-0444">Lipid biosynthesis</keyword>
<keyword id="KW-0443">Lipid metabolism</keyword>
<keyword id="KW-0472">Membrane</keyword>
<keyword id="KW-0479">Metal-binding</keyword>
<keyword id="KW-0560">Oxidoreductase</keyword>
<keyword id="KW-1185">Reference proteome</keyword>
<keyword id="KW-0812">Transmembrane</keyword>
<keyword id="KW-1133">Transmembrane helix</keyword>
<keyword id="KW-0813">Transport</keyword>
<feature type="chain" id="PRO_0000434761" description="Acyl-lipid (8-3)-desaturase">
    <location>
        <begin position="1"/>
        <end position="480"/>
    </location>
</feature>
<feature type="transmembrane region" description="Helical" evidence="3">
    <location>
        <begin position="151"/>
        <end position="171"/>
    </location>
</feature>
<feature type="transmembrane region" description="Helical" evidence="3">
    <location>
        <begin position="173"/>
        <end position="193"/>
    </location>
</feature>
<feature type="transmembrane region" description="Helical" evidence="3">
    <location>
        <begin position="280"/>
        <end position="300"/>
    </location>
</feature>
<feature type="transmembrane region" description="Helical" evidence="3">
    <location>
        <begin position="322"/>
        <end position="342"/>
    </location>
</feature>
<feature type="transmembrane region" description="Helical" evidence="3">
    <location>
        <begin position="348"/>
        <end position="368"/>
    </location>
</feature>
<feature type="domain" description="Cytochrome b5 heme-binding" evidence="4">
    <location>
        <begin position="33"/>
        <end position="107"/>
    </location>
</feature>
<feature type="region of interest" description="Disordered" evidence="5">
    <location>
        <begin position="1"/>
        <end position="30"/>
    </location>
</feature>
<feature type="short sequence motif" description="Histidine box-1" evidence="2">
    <location>
        <begin position="203"/>
        <end position="207"/>
    </location>
</feature>
<feature type="short sequence motif" description="Histidine box-2" evidence="2">
    <location>
        <begin position="238"/>
        <end position="243"/>
    </location>
</feature>
<feature type="short sequence motif" description="Histidine box-3" evidence="2">
    <location>
        <begin position="419"/>
        <end position="423"/>
    </location>
</feature>
<feature type="binding site" description="axial binding residue" evidence="4">
    <location>
        <position position="68"/>
    </location>
    <ligand>
        <name>heme</name>
        <dbReference type="ChEBI" id="CHEBI:30413"/>
    </ligand>
    <ligandPart>
        <name>Fe</name>
        <dbReference type="ChEBI" id="CHEBI:18248"/>
    </ligandPart>
</feature>
<feature type="binding site" description="axial binding residue" evidence="4">
    <location>
        <position position="90"/>
    </location>
    <ligand>
        <name>heme</name>
        <dbReference type="ChEBI" id="CHEBI:30413"/>
    </ligand>
    <ligandPart>
        <name>Fe</name>
        <dbReference type="ChEBI" id="CHEBI:18248"/>
    </ligandPart>
</feature>
<accession>A9SIZ6</accession>
<name>D5FAD_PHYPA</name>
<organism>
    <name type="scientific">Physcomitrium patens</name>
    <name type="common">Spreading-leaved earth moss</name>
    <name type="synonym">Physcomitrella patens</name>
    <dbReference type="NCBI Taxonomy" id="3218"/>
    <lineage>
        <taxon>Eukaryota</taxon>
        <taxon>Viridiplantae</taxon>
        <taxon>Streptophyta</taxon>
        <taxon>Embryophyta</taxon>
        <taxon>Bryophyta</taxon>
        <taxon>Bryophytina</taxon>
        <taxon>Bryopsida</taxon>
        <taxon>Funariidae</taxon>
        <taxon>Funariales</taxon>
        <taxon>Funariaceae</taxon>
        <taxon>Physcomitrium</taxon>
    </lineage>
</organism>
<reference key="1">
    <citation type="journal article" date="2008" name="Science">
        <title>The Physcomitrella genome reveals evolutionary insights into the conquest of land by plants.</title>
        <authorList>
            <person name="Rensing S.A."/>
            <person name="Lang D."/>
            <person name="Zimmer A.D."/>
            <person name="Terry A."/>
            <person name="Salamov A."/>
            <person name="Shapiro H."/>
            <person name="Nishiyama T."/>
            <person name="Perroud P.-F."/>
            <person name="Lindquist E.A."/>
            <person name="Kamisugi Y."/>
            <person name="Tanahashi T."/>
            <person name="Sakakibara K."/>
            <person name="Fujita T."/>
            <person name="Oishi K."/>
            <person name="Shin-I T."/>
            <person name="Kuroki Y."/>
            <person name="Toyoda A."/>
            <person name="Suzuki Y."/>
            <person name="Hashimoto S.-I."/>
            <person name="Yamaguchi K."/>
            <person name="Sugano S."/>
            <person name="Kohara Y."/>
            <person name="Fujiyama A."/>
            <person name="Anterola A."/>
            <person name="Aoki S."/>
            <person name="Ashton N."/>
            <person name="Barbazuk W.B."/>
            <person name="Barker E."/>
            <person name="Bennetzen J.L."/>
            <person name="Blankenship R."/>
            <person name="Cho S.H."/>
            <person name="Dutcher S.K."/>
            <person name="Estelle M."/>
            <person name="Fawcett J.A."/>
            <person name="Gundlach H."/>
            <person name="Hanada K."/>
            <person name="Heyl A."/>
            <person name="Hicks K.A."/>
            <person name="Hughes J."/>
            <person name="Lohr M."/>
            <person name="Mayer K."/>
            <person name="Melkozernov A."/>
            <person name="Murata T."/>
            <person name="Nelson D.R."/>
            <person name="Pils B."/>
            <person name="Prigge M."/>
            <person name="Reiss B."/>
            <person name="Renner T."/>
            <person name="Rombauts S."/>
            <person name="Rushton P.J."/>
            <person name="Sanderfoot A."/>
            <person name="Schween G."/>
            <person name="Shiu S.-H."/>
            <person name="Stueber K."/>
            <person name="Theodoulou F.L."/>
            <person name="Tu H."/>
            <person name="Van de Peer Y."/>
            <person name="Verrier P.J."/>
            <person name="Waters E."/>
            <person name="Wood A."/>
            <person name="Yang L."/>
            <person name="Cove D."/>
            <person name="Cuming A.C."/>
            <person name="Hasebe M."/>
            <person name="Lucas S."/>
            <person name="Mishler B.D."/>
            <person name="Reski R."/>
            <person name="Grigoriev I.V."/>
            <person name="Quatrano R.S."/>
            <person name="Boore J.L."/>
        </authorList>
    </citation>
    <scope>NUCLEOTIDE SEQUENCE [LARGE SCALE GENOMIC DNA]</scope>
    <source>
        <strain>cv. Gransden 2004</strain>
    </source>
</reference>
<reference key="2">
    <citation type="journal article" date="2006" name="J. Biol. Chem.">
        <title>Identification and functional characterization of the moss Physcomitrella patens delta5-desaturase gene involved in arachidonic and eicosapentaenoic acid biosynthesis.</title>
        <authorList>
            <person name="Kaewsuwan S."/>
            <person name="Cahoon E.B."/>
            <person name="Perroud P.F."/>
            <person name="Wiwat C."/>
            <person name="Panvisavas N."/>
            <person name="Quatrano R.S."/>
            <person name="Cove D.J."/>
            <person name="Bunyapraphatsara N."/>
        </authorList>
    </citation>
    <scope>FUNCTION</scope>
    <scope>CATALYTIC ACTIVITY</scope>
    <scope>DISRUPTION PHENOTYPE</scope>
</reference>
<comment type="function">
    <text evidence="6">Fatty acid desaturase that introduces a cis double bond at the 5-position in 20-carbon polyunsaturated fatty acids incorporated in a glycerolipid that contain a Delta(8) double bond.</text>
</comment>
<comment type="catalytic activity">
    <reaction evidence="9">
        <text>an (8Z,11Z,14Z)-icosatrienoyl-containing glycerolipid + 2 Fe(II)-[cytochrome b5] + O2 + 2 H(+) = (5Z,8Z,11Z,14Z)-eicosatetraenoyl-containing glycerolipid + 2 Fe(III)-[cytochrome b5] + 2 H2O</text>
        <dbReference type="Rhea" id="RHEA:46260"/>
        <dbReference type="Rhea" id="RHEA-COMP:10438"/>
        <dbReference type="Rhea" id="RHEA-COMP:10439"/>
        <dbReference type="ChEBI" id="CHEBI:15377"/>
        <dbReference type="ChEBI" id="CHEBI:15378"/>
        <dbReference type="ChEBI" id="CHEBI:15379"/>
        <dbReference type="ChEBI" id="CHEBI:29033"/>
        <dbReference type="ChEBI" id="CHEBI:29034"/>
        <dbReference type="ChEBI" id="CHEBI:90076"/>
        <dbReference type="ChEBI" id="CHEBI:90077"/>
        <dbReference type="EC" id="1.14.19.30"/>
    </reaction>
</comment>
<comment type="catalytic activity">
    <reaction evidence="9">
        <text>an (8Z,11Z,14Z,17Z)-eicosatetraenoyl-containing glycerolipid + 2 Fe(II)-[cytochrome b5] + O2 + 2 H(+) = a (5Z,8Z,11Z,14Z,17Z)-eicosapentaenoyl-containing glycerolipid + 2 Fe(III)-[cytochrome b5] + 2 H2O</text>
        <dbReference type="Rhea" id="RHEA:46264"/>
        <dbReference type="Rhea" id="RHEA-COMP:10438"/>
        <dbReference type="Rhea" id="RHEA-COMP:10439"/>
        <dbReference type="ChEBI" id="CHEBI:15377"/>
        <dbReference type="ChEBI" id="CHEBI:15378"/>
        <dbReference type="ChEBI" id="CHEBI:15379"/>
        <dbReference type="ChEBI" id="CHEBI:29033"/>
        <dbReference type="ChEBI" id="CHEBI:29034"/>
        <dbReference type="ChEBI" id="CHEBI:90082"/>
        <dbReference type="ChEBI" id="CHEBI:90083"/>
        <dbReference type="EC" id="1.14.19.30"/>
    </reaction>
</comment>
<comment type="cofactor">
    <cofactor evidence="1">
        <name>Fe(2+)</name>
        <dbReference type="ChEBI" id="CHEBI:29033"/>
    </cofactor>
</comment>
<comment type="subcellular location">
    <subcellularLocation>
        <location evidence="3">Membrane</location>
        <topology evidence="3">Multi-pass membrane protein</topology>
    </subcellularLocation>
</comment>
<comment type="domain">
    <text evidence="8">The cytochrome b5 heme-binding domain acts as the direct electron donor to the active site of the desaturase, and does not require an external cytochrome.</text>
</comment>
<comment type="disruption phenotype">
    <text evidence="6">Defects in the fatty acid composition.</text>
</comment>
<comment type="similarity">
    <text evidence="8">Belongs to the fatty acid desaturase type 1 family.</text>
</comment>
<protein>
    <recommendedName>
        <fullName evidence="8">Acyl-lipid (8-3)-desaturase</fullName>
        <ecNumber evidence="9">1.14.19.30</ecNumber>
    </recommendedName>
    <alternativeName>
        <fullName evidence="8">AN Delta(5)-fatty-acid desaturase</fullName>
    </alternativeName>
    <alternativeName>
        <fullName evidence="8">Acyl-lipid 5-desaturase</fullName>
    </alternativeName>
    <alternativeName>
        <fullName evidence="8">Delta-5 desaturase</fullName>
        <shortName evidence="7">PPDES5</shortName>
    </alternativeName>
</protein>
<gene>
    <name evidence="8" type="primary">DES5</name>
    <name evidence="10" type="ORF">PHYPADRAFT_165175</name>
</gene>
<sequence length="480" mass="54267">MAPHSADTAGLVPSDELRLRTSNSKGPEQEQTLKKYTLEDVSRHNTPADCWLVIWGKVYDVTSWIPNHPGGSLIHVKAGQDSTQLFDSYHPLYVRKMLAKYCIGELVPSAGDDKFKKATLEYADAENEDFYLVVKQRVESYFKSNKINPQIHPHMILKSLFILGGYFASYYLAFFWSSSVLVSLFFALWMGFFAAEVGVSIQHDGNHGSYTKWRGFGYIMGASLDLVGASSFMWRQQHVVGHHSFTNVDNYDPDIRVKDPDVRRVATTQPRQWYHAYQHIYLAVLYGTLALKSIFLDDFLAYFTGSIGPVKVAKMTPLEFNIFFQGKLLYAFYMFVLPSVYGVHSGGTFLALYVASQLITGWMLAFLFQVAHVVDDVAFPTPEGGKVKGGWAAMQVATTTDFSPRSWFWGHVSGGLNNQIEHHLFPGVCHVHYPAIQPIVEKTCKEFDVPYVAYPTFWTALRAHFAHLKKVGLTEFRLDG</sequence>
<dbReference type="EC" id="1.14.19.30" evidence="9"/>
<dbReference type="EMBL" id="DS544972">
    <property type="protein sequence ID" value="EDQ68896.1"/>
    <property type="molecule type" value="Genomic_DNA"/>
</dbReference>
<dbReference type="RefSeq" id="XP_001766264.1">
    <property type="nucleotide sequence ID" value="XM_001766212.1"/>
</dbReference>
<dbReference type="SMR" id="A9SIZ6"/>
<dbReference type="PaxDb" id="3218-PP1S83_225V6.2"/>
<dbReference type="EnsemblPlants" id="Pp3c15_5610V3.1">
    <property type="protein sequence ID" value="Pp3c15_5610V3.1"/>
    <property type="gene ID" value="Pp3c15_5610"/>
</dbReference>
<dbReference type="EnsemblPlants" id="Pp3c15_5610V3.2">
    <property type="protein sequence ID" value="Pp3c15_5610V3.2"/>
    <property type="gene ID" value="Pp3c15_5610"/>
</dbReference>
<dbReference type="EnsemblPlants" id="Pp3c15_5610V3.3">
    <property type="protein sequence ID" value="Pp3c15_5610V3.3"/>
    <property type="gene ID" value="Pp3c15_5610"/>
</dbReference>
<dbReference type="Gramene" id="Pp3c15_5610V3.1">
    <property type="protein sequence ID" value="Pp3c15_5610V3.1"/>
    <property type="gene ID" value="Pp3c15_5610"/>
</dbReference>
<dbReference type="Gramene" id="Pp3c15_5610V3.2">
    <property type="protein sequence ID" value="Pp3c15_5610V3.2"/>
    <property type="gene ID" value="Pp3c15_5610"/>
</dbReference>
<dbReference type="Gramene" id="Pp3c15_5610V3.3">
    <property type="protein sequence ID" value="Pp3c15_5610V3.3"/>
    <property type="gene ID" value="Pp3c15_5610"/>
</dbReference>
<dbReference type="eggNOG" id="KOG4232">
    <property type="taxonomic scope" value="Eukaryota"/>
</dbReference>
<dbReference type="HOGENOM" id="CLU_030320_1_0_1"/>
<dbReference type="InParanoid" id="A9SIZ6"/>
<dbReference type="OMA" id="RECTAIF"/>
<dbReference type="OrthoDB" id="260091at2759"/>
<dbReference type="Proteomes" id="UP000006727">
    <property type="component" value="Chromosome 15"/>
</dbReference>
<dbReference type="GO" id="GO:0016020">
    <property type="term" value="C:membrane"/>
    <property type="evidence" value="ECO:0007669"/>
    <property type="project" value="UniProtKB-SubCell"/>
</dbReference>
<dbReference type="GO" id="GO:0102866">
    <property type="term" value="F:acyl-lipid (8-3)-desaturase activity"/>
    <property type="evidence" value="ECO:0007669"/>
    <property type="project" value="UniProtKB-EC"/>
</dbReference>
<dbReference type="GO" id="GO:0046872">
    <property type="term" value="F:metal ion binding"/>
    <property type="evidence" value="ECO:0007669"/>
    <property type="project" value="UniProtKB-KW"/>
</dbReference>
<dbReference type="GO" id="GO:0016717">
    <property type="term" value="F:oxidoreductase activity, acting on paired donors, with oxidation of a pair of donors resulting in the reduction of molecular oxygen to two molecules of water"/>
    <property type="evidence" value="ECO:0000314"/>
    <property type="project" value="UniProtKB"/>
</dbReference>
<dbReference type="GO" id="GO:0006629">
    <property type="term" value="P:lipid metabolic process"/>
    <property type="evidence" value="ECO:0000318"/>
    <property type="project" value="GO_Central"/>
</dbReference>
<dbReference type="GO" id="GO:0042759">
    <property type="term" value="P:long-chain fatty acid biosynthetic process"/>
    <property type="evidence" value="ECO:0000314"/>
    <property type="project" value="UniProtKB"/>
</dbReference>
<dbReference type="GO" id="GO:0006636">
    <property type="term" value="P:unsaturated fatty acid biosynthetic process"/>
    <property type="evidence" value="ECO:0000314"/>
    <property type="project" value="UniProtKB"/>
</dbReference>
<dbReference type="CDD" id="cd03506">
    <property type="entry name" value="Delta6-FADS-like"/>
    <property type="match status" value="1"/>
</dbReference>
<dbReference type="FunFam" id="3.10.120.10:FF:000007">
    <property type="entry name" value="Sulfite oxidase, mitochondrial"/>
    <property type="match status" value="1"/>
</dbReference>
<dbReference type="Gene3D" id="3.10.120.10">
    <property type="entry name" value="Cytochrome b5-like heme/steroid binding domain"/>
    <property type="match status" value="1"/>
</dbReference>
<dbReference type="InterPro" id="IPR001199">
    <property type="entry name" value="Cyt_B5-like_heme/steroid-bd"/>
</dbReference>
<dbReference type="InterPro" id="IPR036400">
    <property type="entry name" value="Cyt_B5-like_heme/steroid_sf"/>
</dbReference>
<dbReference type="InterPro" id="IPR005804">
    <property type="entry name" value="FA_desaturase_dom"/>
</dbReference>
<dbReference type="InterPro" id="IPR012171">
    <property type="entry name" value="Fatty_acid_desaturase"/>
</dbReference>
<dbReference type="PANTHER" id="PTHR19353:SF19">
    <property type="entry name" value="DELTA(5) FATTY ACID DESATURASE C-RELATED"/>
    <property type="match status" value="1"/>
</dbReference>
<dbReference type="PANTHER" id="PTHR19353">
    <property type="entry name" value="FATTY ACID DESATURASE 2"/>
    <property type="match status" value="1"/>
</dbReference>
<dbReference type="Pfam" id="PF00173">
    <property type="entry name" value="Cyt-b5"/>
    <property type="match status" value="1"/>
</dbReference>
<dbReference type="Pfam" id="PF00487">
    <property type="entry name" value="FA_desaturase"/>
    <property type="match status" value="1"/>
</dbReference>
<dbReference type="PIRSF" id="PIRSF015921">
    <property type="entry name" value="FA_sphinglp_des"/>
    <property type="match status" value="1"/>
</dbReference>
<dbReference type="SMART" id="SM01117">
    <property type="entry name" value="Cyt-b5"/>
    <property type="match status" value="1"/>
</dbReference>
<dbReference type="SUPFAM" id="SSF55856">
    <property type="entry name" value="Cytochrome b5-like heme/steroid binding domain"/>
    <property type="match status" value="1"/>
</dbReference>
<dbReference type="PROSITE" id="PS50255">
    <property type="entry name" value="CYTOCHROME_B5_2"/>
    <property type="match status" value="1"/>
</dbReference>